<protein>
    <recommendedName>
        <fullName evidence="10">Sodium-coupled neutral amino acid transporter 4</fullName>
    </recommendedName>
    <alternativeName>
        <fullName>Amino acid transporter A3</fullName>
    </alternativeName>
    <alternativeName>
        <fullName>Na(+)-coupled neutral amino acid transporter 4</fullName>
    </alternativeName>
    <alternativeName>
        <fullName>Solute carrier family 38 member 4</fullName>
    </alternativeName>
    <alternativeName>
        <fullName>System A amino acid transporter 3</fullName>
    </alternativeName>
</protein>
<reference key="1">
    <citation type="journal article" date="2003" name="Biochem. J.">
        <title>Mouse system-N amino acid transporter, mNAT3, expressed in hepatocytes and regulated by insulin-activated and phosphoinositide 3-kinase-dependent signalling.</title>
        <authorList>
            <person name="Gu S."/>
            <person name="Langlais P."/>
            <person name="Liu F."/>
            <person name="Jiang J.X."/>
        </authorList>
    </citation>
    <scope>NUCLEOTIDE SEQUENCE [MRNA]</scope>
    <scope>FUNCTION</scope>
    <scope>TRANSPORTER ACTIVITY</scope>
    <scope>BIOPHYSICOCHEMICAL PROPERTIES</scope>
    <scope>TISSUE SPECIFICITY</scope>
    <scope>SUBCELLULAR LOCATION</scope>
    <scope>INDUCTION</scope>
    <source>
        <strain>C57BL/6J</strain>
        <tissue>Liver</tissue>
    </source>
</reference>
<reference key="2">
    <citation type="submission" date="2001-01" db="EMBL/GenBank/DDBJ databases">
        <title>Molecular cloning and characterization of a novel system A amino acid transporter from human liver.</title>
        <authorList>
            <person name="Matsuo H."/>
            <person name="Kanai Y."/>
            <person name="Kim D.K."/>
            <person name="Cha S.H."/>
            <person name="Chairoungdua A."/>
            <person name="Fukuda J."/>
            <person name="Endou H."/>
        </authorList>
    </citation>
    <scope>NUCLEOTIDE SEQUENCE [MRNA]</scope>
    <source>
        <tissue>Liver</tissue>
    </source>
</reference>
<reference key="3">
    <citation type="journal article" date="2005" name="Science">
        <title>The transcriptional landscape of the mammalian genome.</title>
        <authorList>
            <person name="Carninci P."/>
            <person name="Kasukawa T."/>
            <person name="Katayama S."/>
            <person name="Gough J."/>
            <person name="Frith M.C."/>
            <person name="Maeda N."/>
            <person name="Oyama R."/>
            <person name="Ravasi T."/>
            <person name="Lenhard B."/>
            <person name="Wells C."/>
            <person name="Kodzius R."/>
            <person name="Shimokawa K."/>
            <person name="Bajic V.B."/>
            <person name="Brenner S.E."/>
            <person name="Batalov S."/>
            <person name="Forrest A.R."/>
            <person name="Zavolan M."/>
            <person name="Davis M.J."/>
            <person name="Wilming L.G."/>
            <person name="Aidinis V."/>
            <person name="Allen J.E."/>
            <person name="Ambesi-Impiombato A."/>
            <person name="Apweiler R."/>
            <person name="Aturaliya R.N."/>
            <person name="Bailey T.L."/>
            <person name="Bansal M."/>
            <person name="Baxter L."/>
            <person name="Beisel K.W."/>
            <person name="Bersano T."/>
            <person name="Bono H."/>
            <person name="Chalk A.M."/>
            <person name="Chiu K.P."/>
            <person name="Choudhary V."/>
            <person name="Christoffels A."/>
            <person name="Clutterbuck D.R."/>
            <person name="Crowe M.L."/>
            <person name="Dalla E."/>
            <person name="Dalrymple B.P."/>
            <person name="de Bono B."/>
            <person name="Della Gatta G."/>
            <person name="di Bernardo D."/>
            <person name="Down T."/>
            <person name="Engstrom P."/>
            <person name="Fagiolini M."/>
            <person name="Faulkner G."/>
            <person name="Fletcher C.F."/>
            <person name="Fukushima T."/>
            <person name="Furuno M."/>
            <person name="Futaki S."/>
            <person name="Gariboldi M."/>
            <person name="Georgii-Hemming P."/>
            <person name="Gingeras T.R."/>
            <person name="Gojobori T."/>
            <person name="Green R.E."/>
            <person name="Gustincich S."/>
            <person name="Harbers M."/>
            <person name="Hayashi Y."/>
            <person name="Hensch T.K."/>
            <person name="Hirokawa N."/>
            <person name="Hill D."/>
            <person name="Huminiecki L."/>
            <person name="Iacono M."/>
            <person name="Ikeo K."/>
            <person name="Iwama A."/>
            <person name="Ishikawa T."/>
            <person name="Jakt M."/>
            <person name="Kanapin A."/>
            <person name="Katoh M."/>
            <person name="Kawasawa Y."/>
            <person name="Kelso J."/>
            <person name="Kitamura H."/>
            <person name="Kitano H."/>
            <person name="Kollias G."/>
            <person name="Krishnan S.P."/>
            <person name="Kruger A."/>
            <person name="Kummerfeld S.K."/>
            <person name="Kurochkin I.V."/>
            <person name="Lareau L.F."/>
            <person name="Lazarevic D."/>
            <person name="Lipovich L."/>
            <person name="Liu J."/>
            <person name="Liuni S."/>
            <person name="McWilliam S."/>
            <person name="Madan Babu M."/>
            <person name="Madera M."/>
            <person name="Marchionni L."/>
            <person name="Matsuda H."/>
            <person name="Matsuzawa S."/>
            <person name="Miki H."/>
            <person name="Mignone F."/>
            <person name="Miyake S."/>
            <person name="Morris K."/>
            <person name="Mottagui-Tabar S."/>
            <person name="Mulder N."/>
            <person name="Nakano N."/>
            <person name="Nakauchi H."/>
            <person name="Ng P."/>
            <person name="Nilsson R."/>
            <person name="Nishiguchi S."/>
            <person name="Nishikawa S."/>
            <person name="Nori F."/>
            <person name="Ohara O."/>
            <person name="Okazaki Y."/>
            <person name="Orlando V."/>
            <person name="Pang K.C."/>
            <person name="Pavan W.J."/>
            <person name="Pavesi G."/>
            <person name="Pesole G."/>
            <person name="Petrovsky N."/>
            <person name="Piazza S."/>
            <person name="Reed J."/>
            <person name="Reid J.F."/>
            <person name="Ring B.Z."/>
            <person name="Ringwald M."/>
            <person name="Rost B."/>
            <person name="Ruan Y."/>
            <person name="Salzberg S.L."/>
            <person name="Sandelin A."/>
            <person name="Schneider C."/>
            <person name="Schoenbach C."/>
            <person name="Sekiguchi K."/>
            <person name="Semple C.A."/>
            <person name="Seno S."/>
            <person name="Sessa L."/>
            <person name="Sheng Y."/>
            <person name="Shibata Y."/>
            <person name="Shimada H."/>
            <person name="Shimada K."/>
            <person name="Silva D."/>
            <person name="Sinclair B."/>
            <person name="Sperling S."/>
            <person name="Stupka E."/>
            <person name="Sugiura K."/>
            <person name="Sultana R."/>
            <person name="Takenaka Y."/>
            <person name="Taki K."/>
            <person name="Tammoja K."/>
            <person name="Tan S.L."/>
            <person name="Tang S."/>
            <person name="Taylor M.S."/>
            <person name="Tegner J."/>
            <person name="Teichmann S.A."/>
            <person name="Ueda H.R."/>
            <person name="van Nimwegen E."/>
            <person name="Verardo R."/>
            <person name="Wei C.L."/>
            <person name="Yagi K."/>
            <person name="Yamanishi H."/>
            <person name="Zabarovsky E."/>
            <person name="Zhu S."/>
            <person name="Zimmer A."/>
            <person name="Hide W."/>
            <person name="Bult C."/>
            <person name="Grimmond S.M."/>
            <person name="Teasdale R.D."/>
            <person name="Liu E.T."/>
            <person name="Brusic V."/>
            <person name="Quackenbush J."/>
            <person name="Wahlestedt C."/>
            <person name="Mattick J.S."/>
            <person name="Hume D.A."/>
            <person name="Kai C."/>
            <person name="Sasaki D."/>
            <person name="Tomaru Y."/>
            <person name="Fukuda S."/>
            <person name="Kanamori-Katayama M."/>
            <person name="Suzuki M."/>
            <person name="Aoki J."/>
            <person name="Arakawa T."/>
            <person name="Iida J."/>
            <person name="Imamura K."/>
            <person name="Itoh M."/>
            <person name="Kato T."/>
            <person name="Kawaji H."/>
            <person name="Kawagashira N."/>
            <person name="Kawashima T."/>
            <person name="Kojima M."/>
            <person name="Kondo S."/>
            <person name="Konno H."/>
            <person name="Nakano K."/>
            <person name="Ninomiya N."/>
            <person name="Nishio T."/>
            <person name="Okada M."/>
            <person name="Plessy C."/>
            <person name="Shibata K."/>
            <person name="Shiraki T."/>
            <person name="Suzuki S."/>
            <person name="Tagami M."/>
            <person name="Waki K."/>
            <person name="Watahiki A."/>
            <person name="Okamura-Oho Y."/>
            <person name="Suzuki H."/>
            <person name="Kawai J."/>
            <person name="Hayashizaki Y."/>
        </authorList>
    </citation>
    <scope>NUCLEOTIDE SEQUENCE [LARGE SCALE MRNA]</scope>
    <source>
        <strain>C57BL/6J</strain>
        <tissue>Embryo</tissue>
        <tissue>Placenta</tissue>
    </source>
</reference>
<reference key="4">
    <citation type="journal article" date="2004" name="Genome Res.">
        <title>The status, quality, and expansion of the NIH full-length cDNA project: the Mammalian Gene Collection (MGC).</title>
        <authorList>
            <consortium name="The MGC Project Team"/>
        </authorList>
    </citation>
    <scope>NUCLEOTIDE SEQUENCE [LARGE SCALE MRNA]</scope>
    <source>
        <strain>FVB/N</strain>
        <tissue>Liver</tissue>
    </source>
</reference>
<reference key="5">
    <citation type="journal article" date="2002" name="Biochem. Biophys. Res. Commun.">
        <title>Asb4, Ata3, and Dcn are novel imprinted genes identified by high-throughput screening using RIKEN cDNA microarray.</title>
        <authorList>
            <person name="Mizuno Y."/>
            <person name="Sotomaru Y."/>
            <person name="Katsuzawa Y."/>
            <person name="Kono T."/>
            <person name="Meguro M."/>
            <person name="Oshimura M."/>
            <person name="Kawai J."/>
            <person name="Tomaru Y."/>
            <person name="Kiyosawa H."/>
            <person name="Nikaido I."/>
            <person name="Amanuma H."/>
            <person name="Hayashizaki Y."/>
            <person name="Okazaki Y."/>
        </authorList>
    </citation>
    <scope>IMPRINTING</scope>
    <scope>MISCELLANEOUS</scope>
</reference>
<reference key="6">
    <citation type="journal article" date="2012" name="Int. J. Biochem. Mol. Biol.">
        <title>Residue cysteine 232 is important for substrate transport of neutral amino acid transporter, SNAT4.</title>
        <authorList>
            <person name="Padmanabhan R."/>
            <person name="Gu S."/>
            <person name="Nicholson B.J."/>
            <person name="Jiang J.X."/>
        </authorList>
    </citation>
    <scope>FUNCTION</scope>
    <scope>TRANSPORTER ACTIVITY</scope>
    <scope>BIOPHYSICOCHEMICAL PROPERTIES</scope>
    <scope>MUTAGENESIS OF CYS-232 AND CYS-345</scope>
    <scope>SITE</scope>
</reference>
<reference key="7">
    <citation type="journal article" date="2013" name="PLoS ONE">
        <title>Identification of a disulfide bridge important for transport function of SNAT4 neutral amino acid transporter.</title>
        <authorList>
            <person name="Padmanabhan Iyer R."/>
            <person name="Gu S."/>
            <person name="Nicholson B.J."/>
            <person name="Jiang J.X."/>
        </authorList>
    </citation>
    <scope>FUNCTION</scope>
    <scope>TRANSPORTER ACTIVITY</scope>
    <scope>DISULFIDE BOND</scope>
    <scope>SUBCELLULAR LOCATION</scope>
    <scope>MUTAGENESIS OF CYS-18; CYS-232; CYS-249; CYS-321 AND CYS-345</scope>
</reference>
<reference key="8">
    <citation type="journal article" date="2019" name="Proc. Natl. Acad. Sci. U.S.A.">
        <title>Paternal knockout of Slc38a4/SNAT4 causes placental hypoplasia associated with intrauterine growth restriction in mice.</title>
        <authorList>
            <person name="Matoba S."/>
            <person name="Nakamuta S."/>
            <person name="Miura K."/>
            <person name="Hirose M."/>
            <person name="Shiura H."/>
            <person name="Kohda T."/>
            <person name="Nakamuta N."/>
            <person name="Ogura A."/>
        </authorList>
    </citation>
    <scope>TISSUE SPECIFICITY</scope>
    <scope>DISRUPTION PHENOTYPE</scope>
</reference>
<comment type="function">
    <text evidence="1 2 5 6 7">Symporter that cotransports neutral amino acids and sodium ions from the extraccellular to the intracellular side of the cell membrane (PubMed:12537539, PubMed:23301202, PubMed:23451088). The transport is electrogenic, pH dependent and partially tolerates substitution of Na(+) by Li(+) (PubMed:12537539). Preferentially transports smaller amino acids, such as glycine, L-alanine, L-serine, L-asparagine and L-threonine, followed by L-cysteine, L-histidine, L-proline and L-glutamine and L-methionine (By similarity).</text>
</comment>
<comment type="catalytic activity">
    <reaction evidence="5 6 7">
        <text>L-alanine(in) + Na(+)(in) = L-alanine(out) + Na(+)(out)</text>
        <dbReference type="Rhea" id="RHEA:29283"/>
        <dbReference type="ChEBI" id="CHEBI:29101"/>
        <dbReference type="ChEBI" id="CHEBI:57972"/>
    </reaction>
    <physiologicalReaction direction="right-to-left" evidence="11">
        <dbReference type="Rhea" id="RHEA:29285"/>
    </physiologicalReaction>
</comment>
<comment type="catalytic activity">
    <reaction evidence="1">
        <text>L-methionine(in) + Na(+)(in) = L-methionine(out) + Na(+)(out)</text>
        <dbReference type="Rhea" id="RHEA:68240"/>
        <dbReference type="ChEBI" id="CHEBI:29101"/>
        <dbReference type="ChEBI" id="CHEBI:57844"/>
    </reaction>
    <physiologicalReaction direction="right-to-left" evidence="1">
        <dbReference type="Rhea" id="RHEA:68242"/>
    </physiologicalReaction>
</comment>
<comment type="catalytic activity">
    <reaction evidence="1">
        <text>L-asparagine(in) + Na(+)(in) = L-asparagine(out) + Na(+)(out)</text>
        <dbReference type="Rhea" id="RHEA:71383"/>
        <dbReference type="ChEBI" id="CHEBI:29101"/>
        <dbReference type="ChEBI" id="CHEBI:58048"/>
    </reaction>
    <physiologicalReaction direction="right-to-left" evidence="1">
        <dbReference type="Rhea" id="RHEA:71385"/>
    </physiologicalReaction>
</comment>
<comment type="catalytic activity">
    <reaction evidence="1">
        <text>L-threonine(in) + Na(+)(in) = L-threonine(out) + Na(+)(out)</text>
        <dbReference type="Rhea" id="RHEA:69999"/>
        <dbReference type="ChEBI" id="CHEBI:29101"/>
        <dbReference type="ChEBI" id="CHEBI:57926"/>
    </reaction>
    <physiologicalReaction direction="right-to-left" evidence="1">
        <dbReference type="Rhea" id="RHEA:70001"/>
    </physiologicalReaction>
</comment>
<comment type="catalytic activity">
    <reaction evidence="1">
        <text>L-serine(in) + Na(+)(in) = L-serine(out) + Na(+)(out)</text>
        <dbReference type="Rhea" id="RHEA:29575"/>
        <dbReference type="ChEBI" id="CHEBI:29101"/>
        <dbReference type="ChEBI" id="CHEBI:33384"/>
    </reaction>
    <physiologicalReaction direction="right-to-left" evidence="1">
        <dbReference type="Rhea" id="RHEA:29577"/>
    </physiologicalReaction>
</comment>
<comment type="catalytic activity">
    <reaction evidence="1">
        <text>glycine(in) + Na(+)(in) = glycine(out) + Na(+)(out)</text>
        <dbReference type="Rhea" id="RHEA:68228"/>
        <dbReference type="ChEBI" id="CHEBI:29101"/>
        <dbReference type="ChEBI" id="CHEBI:57305"/>
    </reaction>
    <physiologicalReaction direction="right-to-left" evidence="1">
        <dbReference type="Rhea" id="RHEA:68230"/>
    </physiologicalReaction>
</comment>
<comment type="catalytic activity">
    <reaction evidence="5">
        <text>L-glutamine(in) + Na(+)(in) = L-glutamine(out) + Na(+)(out)</text>
        <dbReference type="Rhea" id="RHEA:68236"/>
        <dbReference type="ChEBI" id="CHEBI:29101"/>
        <dbReference type="ChEBI" id="CHEBI:58359"/>
    </reaction>
    <physiologicalReaction direction="right-to-left" evidence="11">
        <dbReference type="Rhea" id="RHEA:68238"/>
    </physiologicalReaction>
</comment>
<comment type="catalytic activity">
    <reaction evidence="5">
        <text>L-histidine(in) + Na(+)(in) = L-histidine(out) + Na(+)(out)</text>
        <dbReference type="Rhea" id="RHEA:71583"/>
        <dbReference type="ChEBI" id="CHEBI:29101"/>
        <dbReference type="ChEBI" id="CHEBI:57595"/>
    </reaction>
    <physiologicalReaction direction="right-to-left" evidence="11">
        <dbReference type="Rhea" id="RHEA:71585"/>
    </physiologicalReaction>
</comment>
<comment type="catalytic activity">
    <reaction evidence="2">
        <text>L-cysteine(in) + Na(+)(in) = L-cysteine(out) + Na(+)(out)</text>
        <dbReference type="Rhea" id="RHEA:68232"/>
        <dbReference type="ChEBI" id="CHEBI:29101"/>
        <dbReference type="ChEBI" id="CHEBI:35235"/>
    </reaction>
    <physiologicalReaction direction="right-to-left" evidence="2">
        <dbReference type="Rhea" id="RHEA:68234"/>
    </physiologicalReaction>
</comment>
<comment type="catalytic activity">
    <reaction evidence="2">
        <text>L-proline(in) + Na(+)(in) = L-proline(out) + Na(+)(out)</text>
        <dbReference type="Rhea" id="RHEA:28967"/>
        <dbReference type="ChEBI" id="CHEBI:29101"/>
        <dbReference type="ChEBI" id="CHEBI:60039"/>
    </reaction>
    <physiologicalReaction direction="right-to-left" evidence="2">
        <dbReference type="Rhea" id="RHEA:28969"/>
    </physiologicalReaction>
</comment>
<comment type="biophysicochemical properties">
    <kinetics>
        <KM evidence="5">1.6 mM for L-alanine</KM>
        <KM evidence="6">0.3 mM for L-alanine</KM>
    </kinetics>
    <phDependence>
        <text evidence="5">Optimum pH is 7.5-8.5.</text>
    </phDependence>
</comment>
<comment type="subcellular location">
    <subcellularLocation>
        <location evidence="5 7">Cell membrane</location>
        <topology evidence="1">Multi-pass membrane protein</topology>
    </subcellularLocation>
    <subcellularLocation>
        <location evidence="1">Cell projection</location>
        <location evidence="1">Microvillus membrane</location>
        <topology evidence="1">Multi-pass membrane protein</topology>
    </subcellularLocation>
    <text evidence="1">Microvillus membrane localization in placenta.</text>
</comment>
<comment type="tissue specificity">
    <text evidence="5 8">Detected in liver, in hepatocytes surrounding the central vein (PubMed:12537539, PubMed:31570606). Not detected in heart, kidney, brain, lung, small intestine, spleen and thymus (PubMed:12537539). Highly expressed in placenta (PubMed:31570606).</text>
</comment>
<comment type="induction">
    <text evidence="5">Up-regulated by insulin.</text>
</comment>
<comment type="PTM">
    <text evidence="7">The disulfide bond plays an important role in substrate transport, but has no effect on trafficking to the cell surface.</text>
</comment>
<comment type="disruption phenotype">
    <text evidence="8">Heterozygous mice pups for SLC38A4 die shortly after birth, and only 28% of pups survive to 2 weeks. Heterozygous mice pups have a significantly reduced body and placental weight when the allele is paternally inherited while mice exhibit normal body and placental weight when the allele is inherited maternally.</text>
</comment>
<comment type="miscellaneous">
    <text evidence="8">Imprinted gene expressed from the paternal allele in blastocysts.</text>
</comment>
<comment type="similarity">
    <text evidence="10">Belongs to the amino acid/polyamine transporter 2 family.</text>
</comment>
<comment type="caution">
    <text evidence="1 7 12">There is a disagreement about sodium-independent transport of cationic amino acids, such as L-arginine and L-lysine (By similarity). While Padmanabhan et al (PubMed:23451088) shown that SLC38A4 may mediate sodium-independent transport of cationic amino acids, such as L-arginine (PubMed:23451088). Recent studies by Fairweather et al., using quantitative LC-MS analysis, shown any transport activity of cationic amino acids, such as L-arginine and L-lysine (By similarity).</text>
</comment>
<comment type="sequence caution" evidence="10">
    <conflict type="erroneous initiation">
        <sequence resource="EMBL-CDS" id="BAE37721"/>
    </conflict>
    <text>Truncated N-terminus.</text>
</comment>
<keyword id="KW-0029">Amino-acid transport</keyword>
<keyword id="KW-1003">Cell membrane</keyword>
<keyword id="KW-0966">Cell projection</keyword>
<keyword id="KW-1015">Disulfide bond</keyword>
<keyword id="KW-0325">Glycoprotein</keyword>
<keyword id="KW-0406">Ion transport</keyword>
<keyword id="KW-0472">Membrane</keyword>
<keyword id="KW-0597">Phosphoprotein</keyword>
<keyword id="KW-1185">Reference proteome</keyword>
<keyword id="KW-0915">Sodium</keyword>
<keyword id="KW-0739">Sodium transport</keyword>
<keyword id="KW-0769">Symport</keyword>
<keyword id="KW-0812">Transmembrane</keyword>
<keyword id="KW-1133">Transmembrane helix</keyword>
<keyword id="KW-0813">Transport</keyword>
<accession>Q8R1S9</accession>
<accession>Q3TEZ9</accession>
<accession>Q3TJ89</accession>
<accession>Q3TPL5</accession>
<accession>Q8VIE7</accession>
<organism>
    <name type="scientific">Mus musculus</name>
    <name type="common">Mouse</name>
    <dbReference type="NCBI Taxonomy" id="10090"/>
    <lineage>
        <taxon>Eukaryota</taxon>
        <taxon>Metazoa</taxon>
        <taxon>Chordata</taxon>
        <taxon>Craniata</taxon>
        <taxon>Vertebrata</taxon>
        <taxon>Euteleostomi</taxon>
        <taxon>Mammalia</taxon>
        <taxon>Eutheria</taxon>
        <taxon>Euarchontoglires</taxon>
        <taxon>Glires</taxon>
        <taxon>Rodentia</taxon>
        <taxon>Myomorpha</taxon>
        <taxon>Muroidea</taxon>
        <taxon>Muridae</taxon>
        <taxon>Murinae</taxon>
        <taxon>Mus</taxon>
        <taxon>Mus</taxon>
    </lineage>
</organism>
<feature type="chain" id="PRO_0000247861" description="Sodium-coupled neutral amino acid transporter 4">
    <location>
        <begin position="1"/>
        <end position="547"/>
    </location>
</feature>
<feature type="topological domain" description="Extracellular" evidence="1 3">
    <location>
        <begin position="1"/>
        <end position="104"/>
    </location>
</feature>
<feature type="transmembrane region" description="Helical" evidence="3">
    <location>
        <begin position="105"/>
        <end position="125"/>
    </location>
</feature>
<feature type="topological domain" description="Cytoplasmic" evidence="1 3">
    <location>
        <begin position="126"/>
        <end position="151"/>
    </location>
</feature>
<feature type="transmembrane region" description="Helical" evidence="3">
    <location>
        <begin position="152"/>
        <end position="172"/>
    </location>
</feature>
<feature type="topological domain" description="Extracellular" evidence="1 3">
    <location>
        <begin position="173"/>
        <end position="195"/>
    </location>
</feature>
<feature type="transmembrane region" description="Helical" evidence="3">
    <location>
        <begin position="196"/>
        <end position="216"/>
    </location>
</feature>
<feature type="topological domain" description="Cytoplasmic" evidence="1 3">
    <location>
        <begin position="217"/>
        <end position="220"/>
    </location>
</feature>
<feature type="transmembrane region" description="Helical" evidence="3">
    <location>
        <begin position="221"/>
        <end position="241"/>
    </location>
</feature>
<feature type="topological domain" description="Extracellular" evidence="1 3">
    <location>
        <begin position="242"/>
        <end position="332"/>
    </location>
</feature>
<feature type="transmembrane region" description="Helical" evidence="3">
    <location>
        <begin position="333"/>
        <end position="353"/>
    </location>
</feature>
<feature type="topological domain" description="Cytoplasmic" evidence="1 3">
    <location>
        <begin position="354"/>
        <end position="369"/>
    </location>
</feature>
<feature type="transmembrane region" description="Helical" evidence="3">
    <location>
        <begin position="370"/>
        <end position="390"/>
    </location>
</feature>
<feature type="topological domain" description="Extracellular" evidence="1 3">
    <location>
        <begin position="391"/>
        <end position="411"/>
    </location>
</feature>
<feature type="transmembrane region" description="Helical" evidence="3">
    <location>
        <begin position="412"/>
        <end position="432"/>
    </location>
</feature>
<feature type="topological domain" description="Cytoplasmic" evidence="1 3">
    <location>
        <begin position="433"/>
        <end position="453"/>
    </location>
</feature>
<feature type="transmembrane region" description="Helical" evidence="3">
    <location>
        <begin position="454"/>
        <end position="474"/>
    </location>
</feature>
<feature type="topological domain" description="Extracellular" evidence="3">
    <location>
        <begin position="475"/>
        <end position="476"/>
    </location>
</feature>
<feature type="transmembrane region" description="Helical" evidence="3">
    <location>
        <begin position="477"/>
        <end position="497"/>
    </location>
</feature>
<feature type="topological domain" description="Cytoplasmic" evidence="1 3">
    <location>
        <begin position="498"/>
        <end position="514"/>
    </location>
</feature>
<feature type="transmembrane region" description="Helical" evidence="3">
    <location>
        <begin position="515"/>
        <end position="535"/>
    </location>
</feature>
<feature type="topological domain" description="Extracellular" evidence="1 3">
    <location>
        <begin position="536"/>
        <end position="547"/>
    </location>
</feature>
<feature type="region of interest" description="Disordered" evidence="4">
    <location>
        <begin position="1"/>
        <end position="34"/>
    </location>
</feature>
<feature type="compositionally biased region" description="Polar residues" evidence="4">
    <location>
        <begin position="19"/>
        <end position="31"/>
    </location>
</feature>
<feature type="site" description="Influences on amino acid transport capacity" evidence="6">
    <location>
        <position position="232"/>
    </location>
</feature>
<feature type="modified residue" description="Phosphoserine" evidence="2">
    <location>
        <position position="49"/>
    </location>
</feature>
<feature type="glycosylation site" description="N-linked (GlcNAc...) asparagine" evidence="3">
    <location>
        <position position="260"/>
    </location>
</feature>
<feature type="glycosylation site" description="N-linked (GlcNAc...) asparagine" evidence="3">
    <location>
        <position position="264"/>
    </location>
</feature>
<feature type="glycosylation site" description="N-linked (GlcNAc...) asparagine" evidence="3">
    <location>
        <position position="276"/>
    </location>
</feature>
<feature type="disulfide bond" evidence="7">
    <location>
        <begin position="249"/>
        <end position="321"/>
    </location>
</feature>
<feature type="mutagenesis site" description="No significant effect on alanine uptake." evidence="7">
    <original>C</original>
    <variation>A</variation>
    <location>
        <position position="18"/>
    </location>
</feature>
<feature type="mutagenesis site" description="40% decrease in alanine uptake. Significantly decreases alanine transporter activity. Does not affect cell surface expression." evidence="6 7">
    <original>C</original>
    <variation>A</variation>
    <location>
        <position position="232"/>
    </location>
</feature>
<feature type="mutagenesis site" description="Abolishes transport activity." evidence="7">
    <original>C</original>
    <variation>A</variation>
    <location>
        <position position="249"/>
    </location>
</feature>
<feature type="mutagenesis site" description="Abolishes transport activity." evidence="7">
    <original>C</original>
    <variation>A</variation>
    <location>
        <position position="321"/>
    </location>
</feature>
<feature type="mutagenesis site" description="No significant effect on alanine uptake. Does not affect alanine transport activity.">
    <original>C</original>
    <variation>A</variation>
    <location>
        <position position="345"/>
    </location>
</feature>
<feature type="sequence conflict" description="In Ref. 3; BAE41099." evidence="10" ref="3">
    <original>G</original>
    <variation>S</variation>
    <location>
        <position position="90"/>
    </location>
</feature>
<feature type="sequence conflict" description="In Ref. 3; BAE37721." evidence="10" ref="3">
    <original>E</original>
    <variation>G</variation>
    <location>
        <position position="143"/>
    </location>
</feature>
<feature type="sequence conflict" description="In Ref. 3; BAE37721." evidence="10" ref="3">
    <original>Q</original>
    <variation>K</variation>
    <location>
        <position position="316"/>
    </location>
</feature>
<feature type="sequence conflict" description="In Ref. 2; BAB84091." evidence="10" ref="2">
    <original>C</original>
    <variation>R</variation>
    <location>
        <position position="345"/>
    </location>
</feature>
<feature type="sequence conflict" description="In Ref. 3; BAE39606." evidence="10" ref="3">
    <original>HH</original>
    <variation>PP</variation>
    <location>
        <begin position="546"/>
        <end position="547"/>
    </location>
</feature>
<proteinExistence type="evidence at protein level"/>
<gene>
    <name evidence="13" type="primary">Slc38a4</name>
    <name type="synonym">Ata3</name>
    <name evidence="9" type="synonym">Nat3</name>
    <name type="synonym">Snat4</name>
</gene>
<sequence length="547" mass="60464">MDPMELNNVSIEPDGDSCSGDSIQDSYTGMENSDKDAMNSQFANEDAESQKFLTNGFLGKKKLADYADEHHPGMTSFGMSSFNLSNAIMGSGILGLSYAMANTGIILFIIMLLTVAILSLYSVHLLLKTAKEGGSLIYEKLGEKAFGWPGKIGAFISITMQNIGAMSSYLFIIKYELPEVIRAFMGLEENTGEWYLNGNYLVLFVSVGIILPLSLLKNLGYLGYTSGFSLSCMVFFVSVVIYKKFQIPCPLPALDHNNGNLTFNNTLPIHMISLPNDSESSGVNFMMDYAHHNPAGLDEKQVAGPLHSNGVEYEAQGAEKCQPKYFVFNSRTAYAIPILAFAFVCHPEVLPIYSELKDRSRRKMQTVSNISISGMLVMYLLAALFGYLSFYGDVEDELLHAYSKVYTFDTALLMVRLAVLVAVTLTVPIVLFPIRTSVITLLFPRKPFSWLKHFGIAAIIIALNNILVILVPTIKYIFGFIGASSATMLIFILPAAFYLKLVKKEPLRSPQKIGALVFLVTGIIFMMGSMALIILDWIYNPPNPNHH</sequence>
<name>S38A4_MOUSE</name>
<dbReference type="EMBL" id="AY027919">
    <property type="protein sequence ID" value="AAK21967.1"/>
    <property type="molecule type" value="mRNA"/>
</dbReference>
<dbReference type="EMBL" id="AB055004">
    <property type="protein sequence ID" value="BAB84091.1"/>
    <property type="molecule type" value="mRNA"/>
</dbReference>
<dbReference type="EMBL" id="AK051023">
    <property type="protein sequence ID" value="BAC34500.1"/>
    <property type="molecule type" value="mRNA"/>
</dbReference>
<dbReference type="EMBL" id="AK164292">
    <property type="protein sequence ID" value="BAE37721.1"/>
    <property type="status" value="ALT_INIT"/>
    <property type="molecule type" value="mRNA"/>
</dbReference>
<dbReference type="EMBL" id="AK167539">
    <property type="protein sequence ID" value="BAE39606.1"/>
    <property type="molecule type" value="mRNA"/>
</dbReference>
<dbReference type="EMBL" id="AK169349">
    <property type="protein sequence ID" value="BAE41099.1"/>
    <property type="molecule type" value="mRNA"/>
</dbReference>
<dbReference type="EMBL" id="BC024072">
    <property type="protein sequence ID" value="AAH24072.1"/>
    <property type="molecule type" value="mRNA"/>
</dbReference>
<dbReference type="EMBL" id="BC024123">
    <property type="protein sequence ID" value="AAH24123.1"/>
    <property type="molecule type" value="mRNA"/>
</dbReference>
<dbReference type="EMBL" id="BC031717">
    <property type="protein sequence ID" value="AAH31717.1"/>
    <property type="molecule type" value="mRNA"/>
</dbReference>
<dbReference type="CCDS" id="CCDS27779.1"/>
<dbReference type="RefSeq" id="NP_001344987.1">
    <property type="nucleotide sequence ID" value="NM_001358058.1"/>
</dbReference>
<dbReference type="RefSeq" id="NP_001344988.1">
    <property type="nucleotide sequence ID" value="NM_001358059.1"/>
</dbReference>
<dbReference type="RefSeq" id="NP_001344989.1">
    <property type="nucleotide sequence ID" value="NM_001358060.1"/>
</dbReference>
<dbReference type="RefSeq" id="NP_081328.2">
    <property type="nucleotide sequence ID" value="NM_027052.3"/>
</dbReference>
<dbReference type="RefSeq" id="XP_006521409.1">
    <property type="nucleotide sequence ID" value="XM_006521346.3"/>
</dbReference>
<dbReference type="RefSeq" id="XP_006521411.1">
    <property type="nucleotide sequence ID" value="XM_006521348.3"/>
</dbReference>
<dbReference type="RefSeq" id="XP_006521412.1">
    <property type="nucleotide sequence ID" value="XM_006521349.3"/>
</dbReference>
<dbReference type="RefSeq" id="XP_006521413.1">
    <property type="nucleotide sequence ID" value="XM_006521350.5"/>
</dbReference>
<dbReference type="RefSeq" id="XP_006521414.1">
    <property type="nucleotide sequence ID" value="XM_006521351.4"/>
</dbReference>
<dbReference type="SMR" id="Q8R1S9"/>
<dbReference type="FunCoup" id="Q8R1S9">
    <property type="interactions" value="1"/>
</dbReference>
<dbReference type="STRING" id="10090.ENSMUSP00000023101"/>
<dbReference type="GlyCosmos" id="Q8R1S9">
    <property type="glycosylation" value="3 sites, No reported glycans"/>
</dbReference>
<dbReference type="GlyGen" id="Q8R1S9">
    <property type="glycosylation" value="3 sites"/>
</dbReference>
<dbReference type="iPTMnet" id="Q8R1S9"/>
<dbReference type="PhosphoSitePlus" id="Q8R1S9"/>
<dbReference type="jPOST" id="Q8R1S9"/>
<dbReference type="PaxDb" id="10090-ENSMUSP00000023101"/>
<dbReference type="PeptideAtlas" id="Q8R1S9"/>
<dbReference type="ProteomicsDB" id="256891"/>
<dbReference type="Pumba" id="Q8R1S9"/>
<dbReference type="Antibodypedia" id="13384">
    <property type="antibodies" value="47 antibodies from 21 providers"/>
</dbReference>
<dbReference type="DNASU" id="69354"/>
<dbReference type="Ensembl" id="ENSMUST00000023101.10">
    <property type="protein sequence ID" value="ENSMUSP00000023101.4"/>
    <property type="gene ID" value="ENSMUSG00000022464.15"/>
</dbReference>
<dbReference type="Ensembl" id="ENSMUST00000166223.2">
    <property type="protein sequence ID" value="ENSMUSP00000127676.2"/>
    <property type="gene ID" value="ENSMUSG00000022464.15"/>
</dbReference>
<dbReference type="Ensembl" id="ENSMUST00000230086.2">
    <property type="protein sequence ID" value="ENSMUSP00000154818.2"/>
    <property type="gene ID" value="ENSMUSG00000022464.15"/>
</dbReference>
<dbReference type="Ensembl" id="ENSMUST00000231039.2">
    <property type="protein sequence ID" value="ENSMUSP00000155158.2"/>
    <property type="gene ID" value="ENSMUSG00000022464.15"/>
</dbReference>
<dbReference type="GeneID" id="69354"/>
<dbReference type="KEGG" id="mmu:69354"/>
<dbReference type="UCSC" id="uc007xko.1">
    <property type="organism name" value="mouse"/>
</dbReference>
<dbReference type="AGR" id="MGI:1916604"/>
<dbReference type="CTD" id="55089"/>
<dbReference type="MGI" id="MGI:1916604">
    <property type="gene designation" value="Slc38a4"/>
</dbReference>
<dbReference type="VEuPathDB" id="HostDB:ENSMUSG00000022464"/>
<dbReference type="eggNOG" id="KOG1305">
    <property type="taxonomic scope" value="Eukaryota"/>
</dbReference>
<dbReference type="GeneTree" id="ENSGT00940000158917"/>
<dbReference type="HOGENOM" id="CLU_009020_0_1_1"/>
<dbReference type="InParanoid" id="Q8R1S9"/>
<dbReference type="OMA" id="QFANDDA"/>
<dbReference type="OrthoDB" id="655540at2759"/>
<dbReference type="PhylomeDB" id="Q8R1S9"/>
<dbReference type="TreeFam" id="TF328787"/>
<dbReference type="Reactome" id="R-MMU-352230">
    <property type="pathway name" value="Amino acid transport across the plasma membrane"/>
</dbReference>
<dbReference type="BioGRID-ORCS" id="69354">
    <property type="hits" value="3 hits in 74 CRISPR screens"/>
</dbReference>
<dbReference type="ChiTaRS" id="Slc38a4">
    <property type="organism name" value="mouse"/>
</dbReference>
<dbReference type="PRO" id="PR:Q8R1S9"/>
<dbReference type="Proteomes" id="UP000000589">
    <property type="component" value="Chromosome 15"/>
</dbReference>
<dbReference type="RNAct" id="Q8R1S9">
    <property type="molecule type" value="protein"/>
</dbReference>
<dbReference type="Bgee" id="ENSMUSG00000022464">
    <property type="expression patterns" value="Expressed in placenta labyrinth and 168 other cell types or tissues"/>
</dbReference>
<dbReference type="ExpressionAtlas" id="Q8R1S9">
    <property type="expression patterns" value="baseline and differential"/>
</dbReference>
<dbReference type="GO" id="GO:0031528">
    <property type="term" value="C:microvillus membrane"/>
    <property type="evidence" value="ECO:0000250"/>
    <property type="project" value="UniProtKB"/>
</dbReference>
<dbReference type="GO" id="GO:0015655">
    <property type="term" value="F:alanine:sodium symporter activity"/>
    <property type="evidence" value="ECO:0000250"/>
    <property type="project" value="UniProtKB"/>
</dbReference>
<dbReference type="GO" id="GO:0061459">
    <property type="term" value="F:L-arginine transmembrane transporter activity"/>
    <property type="evidence" value="ECO:0000314"/>
    <property type="project" value="UniProtKB"/>
</dbReference>
<dbReference type="GO" id="GO:0005295">
    <property type="term" value="F:neutral L-amino acid:sodium symporter activity"/>
    <property type="evidence" value="ECO:0000314"/>
    <property type="project" value="UniProtKB"/>
</dbReference>
<dbReference type="GO" id="GO:1904273">
    <property type="term" value="P:L-alanine import across plasma membrane"/>
    <property type="evidence" value="ECO:0000314"/>
    <property type="project" value="UniProtKB"/>
</dbReference>
<dbReference type="GO" id="GO:1904557">
    <property type="term" value="P:L-alanine transmembrane transport"/>
    <property type="evidence" value="ECO:0000314"/>
    <property type="project" value="UniProtKB"/>
</dbReference>
<dbReference type="GO" id="GO:1903826">
    <property type="term" value="P:L-arginine transmembrane transport"/>
    <property type="evidence" value="ECO:0000314"/>
    <property type="project" value="UniProtKB"/>
</dbReference>
<dbReference type="GO" id="GO:0015804">
    <property type="term" value="P:neutral amino acid transport"/>
    <property type="evidence" value="ECO:0000250"/>
    <property type="project" value="UniProtKB"/>
</dbReference>
<dbReference type="InterPro" id="IPR013057">
    <property type="entry name" value="AA_transpt_TM"/>
</dbReference>
<dbReference type="PANTHER" id="PTHR22950">
    <property type="entry name" value="AMINO ACID TRANSPORTER"/>
    <property type="match status" value="1"/>
</dbReference>
<dbReference type="PANTHER" id="PTHR22950:SF222">
    <property type="entry name" value="SODIUM-COUPLED NEUTRAL AMINO ACID TRANSPORTER 4"/>
    <property type="match status" value="1"/>
</dbReference>
<dbReference type="Pfam" id="PF01490">
    <property type="entry name" value="Aa_trans"/>
    <property type="match status" value="2"/>
</dbReference>
<evidence type="ECO:0000250" key="1">
    <source>
        <dbReference type="UniProtKB" id="Q969I6"/>
    </source>
</evidence>
<evidence type="ECO:0000250" key="2">
    <source>
        <dbReference type="UniProtKB" id="Q9EQ25"/>
    </source>
</evidence>
<evidence type="ECO:0000255" key="3"/>
<evidence type="ECO:0000256" key="4">
    <source>
        <dbReference type="SAM" id="MobiDB-lite"/>
    </source>
</evidence>
<evidence type="ECO:0000269" key="5">
    <source>
    </source>
</evidence>
<evidence type="ECO:0000269" key="6">
    <source>
    </source>
</evidence>
<evidence type="ECO:0000269" key="7">
    <source>
    </source>
</evidence>
<evidence type="ECO:0000269" key="8">
    <source>
    </source>
</evidence>
<evidence type="ECO:0000303" key="9">
    <source>
    </source>
</evidence>
<evidence type="ECO:0000305" key="10"/>
<evidence type="ECO:0000305" key="11">
    <source>
    </source>
</evidence>
<evidence type="ECO:0000305" key="12">
    <source>
    </source>
</evidence>
<evidence type="ECO:0000312" key="13">
    <source>
        <dbReference type="MGI" id="MGI:1916604"/>
    </source>
</evidence>